<keyword id="KW-0031">Aminopeptidase</keyword>
<keyword id="KW-0325">Glycoprotein</keyword>
<keyword id="KW-0378">Hydrolase</keyword>
<keyword id="KW-0472">Membrane</keyword>
<keyword id="KW-0645">Protease</keyword>
<keyword id="KW-1185">Reference proteome</keyword>
<keyword id="KW-0720">Serine protease</keyword>
<keyword id="KW-0735">Signal-anchor</keyword>
<keyword id="KW-0812">Transmembrane</keyword>
<keyword id="KW-1133">Transmembrane helix</keyword>
<keyword id="KW-0926">Vacuole</keyword>
<organism>
    <name type="scientific">Tuber melanosporum (strain Mel28)</name>
    <name type="common">Perigord black truffle</name>
    <dbReference type="NCBI Taxonomy" id="656061"/>
    <lineage>
        <taxon>Eukaryota</taxon>
        <taxon>Fungi</taxon>
        <taxon>Dikarya</taxon>
        <taxon>Ascomycota</taxon>
        <taxon>Pezizomycotina</taxon>
        <taxon>Pezizomycetes</taxon>
        <taxon>Pezizales</taxon>
        <taxon>Tuberaceae</taxon>
        <taxon>Tuber</taxon>
    </lineage>
</organism>
<feature type="chain" id="PRO_0000412166" description="Probable dipeptidyl-aminopeptidase B">
    <location>
        <begin position="1"/>
        <end position="907"/>
    </location>
</feature>
<feature type="topological domain" description="Cytoplasmic" evidence="2">
    <location>
        <begin position="1"/>
        <end position="88"/>
    </location>
</feature>
<feature type="transmembrane region" description="Helical; Signal-anchor for type II membrane protein" evidence="2">
    <location>
        <begin position="89"/>
        <end position="109"/>
    </location>
</feature>
<feature type="topological domain" description="Vacuolar" evidence="2">
    <location>
        <begin position="110"/>
        <end position="907"/>
    </location>
</feature>
<feature type="region of interest" description="Disordered" evidence="3">
    <location>
        <begin position="1"/>
        <end position="71"/>
    </location>
</feature>
<feature type="compositionally biased region" description="Basic and acidic residues" evidence="3">
    <location>
        <begin position="1"/>
        <end position="11"/>
    </location>
</feature>
<feature type="compositionally biased region" description="Low complexity" evidence="3">
    <location>
        <begin position="22"/>
        <end position="36"/>
    </location>
</feature>
<feature type="active site" description="Charge relay system" evidence="1">
    <location>
        <position position="746"/>
    </location>
</feature>
<feature type="active site" description="Charge relay system" evidence="1">
    <location>
        <position position="823"/>
    </location>
</feature>
<feature type="active site" description="Charge relay system" evidence="1">
    <location>
        <position position="856"/>
    </location>
</feature>
<feature type="glycosylation site" description="N-linked (GlcNAc...) asparagine" evidence="2">
    <location>
        <position position="185"/>
    </location>
</feature>
<feature type="glycosylation site" description="N-linked (GlcNAc...) asparagine" evidence="2">
    <location>
        <position position="341"/>
    </location>
</feature>
<feature type="glycosylation site" description="N-linked (GlcNAc...) asparagine" evidence="2">
    <location>
        <position position="800"/>
    </location>
</feature>
<reference key="1">
    <citation type="journal article" date="2010" name="Nature">
        <title>Perigord black truffle genome uncovers evolutionary origins and mechanisms of symbiosis.</title>
        <authorList>
            <person name="Martin F."/>
            <person name="Kohler A."/>
            <person name="Murat C."/>
            <person name="Balestrini R."/>
            <person name="Coutinho P.M."/>
            <person name="Jaillon O."/>
            <person name="Montanini B."/>
            <person name="Morin E."/>
            <person name="Noel B."/>
            <person name="Percudani R."/>
            <person name="Porcel B."/>
            <person name="Rubini A."/>
            <person name="Amicucci A."/>
            <person name="Amselem J."/>
            <person name="Anthouard V."/>
            <person name="Arcioni S."/>
            <person name="Artiguenave F."/>
            <person name="Aury J.M."/>
            <person name="Ballario P."/>
            <person name="Bolchi A."/>
            <person name="Brenna A."/>
            <person name="Brun A."/>
            <person name="Buee M."/>
            <person name="Cantarel B."/>
            <person name="Chevalier G."/>
            <person name="Couloux A."/>
            <person name="Da Silva C."/>
            <person name="Denoeud F."/>
            <person name="Duplessis S."/>
            <person name="Ghignone S."/>
            <person name="Hilselberger B."/>
            <person name="Iotti M."/>
            <person name="Marcais B."/>
            <person name="Mello A."/>
            <person name="Miranda M."/>
            <person name="Pacioni G."/>
            <person name="Quesneville H."/>
            <person name="Riccioni C."/>
            <person name="Ruotolo R."/>
            <person name="Splivallo R."/>
            <person name="Stocchi V."/>
            <person name="Tisserant E."/>
            <person name="Viscomi A.R."/>
            <person name="Zambonelli A."/>
            <person name="Zampieri E."/>
            <person name="Henrissat B."/>
            <person name="Lebrun M.H."/>
            <person name="Paolocci F."/>
            <person name="Bonfante P."/>
            <person name="Ottonello S."/>
            <person name="Wincker P."/>
        </authorList>
    </citation>
    <scope>NUCLEOTIDE SEQUENCE [LARGE SCALE GENOMIC DNA]</scope>
    <source>
        <strain>Mel28</strain>
    </source>
</reference>
<sequence>MYDQVPYRDTDEATPQIKNDASDSNRSSIDTTSTTSLILERLHREDPDDSPGEYESSGPSQRGKPDEDDDLEIGRAARLKPMERKVRRAMYLLAFLMIGGWFLALAVYVSREHFGTPDTAHDPSATATRKAGKKITLNQVMRGAWRSKTHGIQWINGPHGDQDGLLLTQNSFGDGNFLEVQDVKNDSNTIVLIKDGALQGSGQPVSAIKGWPSSDLKKVLVASDHEKRWRHSYNARYWIYDVEKATTEPLVPSEPEARLSLATWSPKGDAIAFVKDNNVFIRQLGLDLTSEYYSVTQVTKDGGPDLFYGIPDWVYEEEVFSGNSALWWSQDGEFLAFLRTNETEVPEYPIQYFVSRPSGNNPPNGLENYPELEFIKYPKAGAPNPVVHLRFYDLKKKEDFAVTVENDFPDDDRLITEVVWSDGKYLLVRETNRESDVLRMVLIDVSARSGKVVREVDISAIDGGWFEVSKNTRYIPADPASGRPYEGYIDTVIHEGYDHLGYFTPLDNKDPILLTKGQWEVVDAPSAVDLKNGIVYFVATEKSPIERHVYSVKLDGSNFRPVTSTSEDGRYDVSFSKLSGYALLTYEGPGIPWQKVVGTPSGDQSFVKDIEKNQGLATLAAKHELPTFHYSTVNIDGFDLHVVERRPPHFNKKRKYPVLFQVYGGPGSQQVSKSFSIDFQAYIAAGLEYIVVTVDGRGTGFIGRKARVAVRGNLGYWEAHDQIETAKIWGKKGYVDKKRIAIWGWSYGGFMTLKTLEQDAGRTFSYGMAVAPVTDWRFYDSIYTERYMHTPQHNQEGYRNATISDTQALSKSVRFLLMHGVADDNVHMQNSLALLDKLDLASVENYDVHVFPDSDHSIYFHNANRMVYDRLEQWLIRAFNGEFLKLDGLKPIREISEPLRKRNRELV</sequence>
<comment type="function">
    <text evidence="1">Type IV dipeptidyl-peptidase which removes N-terminal dipeptides sequentially from polypeptides having unsubstituted N-termini provided that the penultimate residue is proline.</text>
</comment>
<comment type="catalytic activity">
    <reaction>
        <text>Release of an N-terminal dipeptide, Xaa-Yaa-|-Zaa-, from a polypeptide, preferentially when Yaa is Pro, provided Zaa is neither Pro nor hydroxyproline.</text>
        <dbReference type="EC" id="3.4.14.5"/>
    </reaction>
</comment>
<comment type="subcellular location">
    <subcellularLocation>
        <location evidence="1">Vacuole membrane</location>
        <topology evidence="1">Single-pass type II membrane protein</topology>
    </subcellularLocation>
    <text evidence="1">Lysosome-like vacuoles.</text>
</comment>
<comment type="similarity">
    <text evidence="4">Belongs to the peptidase S9B family.</text>
</comment>
<accession>D5GM60</accession>
<gene>
    <name type="primary">DAPB</name>
    <name type="ORF">GSTUM_00010539001</name>
</gene>
<name>DAPB_TUBMM</name>
<evidence type="ECO:0000250" key="1"/>
<evidence type="ECO:0000255" key="2"/>
<evidence type="ECO:0000256" key="3">
    <source>
        <dbReference type="SAM" id="MobiDB-lite"/>
    </source>
</evidence>
<evidence type="ECO:0000305" key="4"/>
<dbReference type="EC" id="3.4.14.5"/>
<dbReference type="EMBL" id="FN430352">
    <property type="protein sequence ID" value="CAZ85603.1"/>
    <property type="molecule type" value="Genomic_DNA"/>
</dbReference>
<dbReference type="RefSeq" id="XP_002841412.1">
    <property type="nucleotide sequence ID" value="XM_002841366.1"/>
</dbReference>
<dbReference type="SMR" id="D5GM60"/>
<dbReference type="FunCoup" id="D5GM60">
    <property type="interactions" value="300"/>
</dbReference>
<dbReference type="ESTHER" id="tubmm-dapb">
    <property type="family name" value="DPP4N_Peptidase_S9"/>
</dbReference>
<dbReference type="MEROPS" id="S09.006"/>
<dbReference type="GlyCosmos" id="D5GM60">
    <property type="glycosylation" value="3 sites, No reported glycans"/>
</dbReference>
<dbReference type="EnsemblFungi" id="CAZ85603">
    <property type="protein sequence ID" value="CAZ85603"/>
    <property type="gene ID" value="GSTUM_00010539001"/>
</dbReference>
<dbReference type="GeneID" id="9187387"/>
<dbReference type="KEGG" id="tml:GSTUM_00010539001"/>
<dbReference type="eggNOG" id="KOG2100">
    <property type="taxonomic scope" value="Eukaryota"/>
</dbReference>
<dbReference type="HOGENOM" id="CLU_006105_0_1_1"/>
<dbReference type="InParanoid" id="D5GM60"/>
<dbReference type="OMA" id="MRTPQEN"/>
<dbReference type="Proteomes" id="UP000006911">
    <property type="component" value="Unassembled WGS sequence"/>
</dbReference>
<dbReference type="GO" id="GO:0000329">
    <property type="term" value="C:fungal-type vacuole membrane"/>
    <property type="evidence" value="ECO:0007669"/>
    <property type="project" value="EnsemblFungi"/>
</dbReference>
<dbReference type="GO" id="GO:0005886">
    <property type="term" value="C:plasma membrane"/>
    <property type="evidence" value="ECO:0007669"/>
    <property type="project" value="TreeGrafter"/>
</dbReference>
<dbReference type="GO" id="GO:0004177">
    <property type="term" value="F:aminopeptidase activity"/>
    <property type="evidence" value="ECO:0007669"/>
    <property type="project" value="UniProtKB-KW"/>
</dbReference>
<dbReference type="GO" id="GO:0008239">
    <property type="term" value="F:dipeptidyl-peptidase activity"/>
    <property type="evidence" value="ECO:0007669"/>
    <property type="project" value="UniProtKB-EC"/>
</dbReference>
<dbReference type="GO" id="GO:0008236">
    <property type="term" value="F:serine-type peptidase activity"/>
    <property type="evidence" value="ECO:0007669"/>
    <property type="project" value="UniProtKB-KW"/>
</dbReference>
<dbReference type="GO" id="GO:0006508">
    <property type="term" value="P:proteolysis"/>
    <property type="evidence" value="ECO:0007669"/>
    <property type="project" value="UniProtKB-KW"/>
</dbReference>
<dbReference type="FunFam" id="3.40.50.1820:FF:000003">
    <property type="entry name" value="Dipeptidyl peptidase 4"/>
    <property type="match status" value="1"/>
</dbReference>
<dbReference type="Gene3D" id="3.40.50.1820">
    <property type="entry name" value="alpha/beta hydrolase"/>
    <property type="match status" value="1"/>
</dbReference>
<dbReference type="Gene3D" id="2.140.10.30">
    <property type="entry name" value="Dipeptidylpeptidase IV, N-terminal domain"/>
    <property type="match status" value="1"/>
</dbReference>
<dbReference type="InterPro" id="IPR029058">
    <property type="entry name" value="AB_hydrolase_fold"/>
</dbReference>
<dbReference type="InterPro" id="IPR001375">
    <property type="entry name" value="Peptidase_S9_cat"/>
</dbReference>
<dbReference type="InterPro" id="IPR002469">
    <property type="entry name" value="Peptidase_S9B_N"/>
</dbReference>
<dbReference type="InterPro" id="IPR050278">
    <property type="entry name" value="Serine_Prot_S9B/DPPIV"/>
</dbReference>
<dbReference type="PANTHER" id="PTHR11731:SF200">
    <property type="entry name" value="DIPEPTIDYL PEPTIDASE 10, ISOFORM B"/>
    <property type="match status" value="1"/>
</dbReference>
<dbReference type="PANTHER" id="PTHR11731">
    <property type="entry name" value="PROTEASE FAMILY S9B,C DIPEPTIDYL-PEPTIDASE IV-RELATED"/>
    <property type="match status" value="1"/>
</dbReference>
<dbReference type="Pfam" id="PF00930">
    <property type="entry name" value="DPPIV_N"/>
    <property type="match status" value="1"/>
</dbReference>
<dbReference type="Pfam" id="PF00326">
    <property type="entry name" value="Peptidase_S9"/>
    <property type="match status" value="1"/>
</dbReference>
<dbReference type="SUPFAM" id="SSF53474">
    <property type="entry name" value="alpha/beta-Hydrolases"/>
    <property type="match status" value="1"/>
</dbReference>
<dbReference type="SUPFAM" id="SSF82171">
    <property type="entry name" value="DPP6 N-terminal domain-like"/>
    <property type="match status" value="1"/>
</dbReference>
<proteinExistence type="inferred from homology"/>
<protein>
    <recommendedName>
        <fullName>Probable dipeptidyl-aminopeptidase B</fullName>
        <shortName>DPAP B</shortName>
        <ecNumber>3.4.14.5</ecNumber>
    </recommendedName>
</protein>